<evidence type="ECO:0000255" key="1">
    <source>
        <dbReference type="HAMAP-Rule" id="MF_00050"/>
    </source>
</evidence>
<name>EFTS_RICPU</name>
<proteinExistence type="inferred from homology"/>
<sequence length="309" mass="33768">MSEINISAAAVKELREKTGAGMMDCKKALIETSGNFEKASDFLRKKGLAAAAKKAGRIASEGLTAAKVDGLTGVVIEVNSETDFVARNEQFQDLVKDIANFAVIAKTIDTLKTFKMQSGKSVEEEIIENIATIGENLTLRRMDILEISEGAIGSYVHNEVVPNLGKISVLVGLASNAKDKAKLEALAKQIAVHVAGNNPQSIDDSSLDQALIERERKVFFEKSKEEGKPDNIIAKMVEGRIRKFFSEVVLLQQNFLFEPKLTVAEVIKNAEKELGAEIKIAKFIRYELGEGIEHEEKNFADEVAAITQG</sequence>
<reference key="1">
    <citation type="journal article" date="2009" name="PLoS ONE">
        <title>Genome sequence of the endosymbiont Rickettsia peacockii and comparison with virulent Rickettsia rickettsii: identification of virulence factors.</title>
        <authorList>
            <person name="Felsheim R.F."/>
            <person name="Kurtti T.J."/>
            <person name="Munderloh U.G."/>
        </authorList>
    </citation>
    <scope>NUCLEOTIDE SEQUENCE [LARGE SCALE GENOMIC DNA]</scope>
    <source>
        <strain>Rustic</strain>
    </source>
</reference>
<dbReference type="EMBL" id="CP001227">
    <property type="protein sequence ID" value="ACR47352.1"/>
    <property type="molecule type" value="Genomic_DNA"/>
</dbReference>
<dbReference type="RefSeq" id="WP_012736610.1">
    <property type="nucleotide sequence ID" value="NC_012730.1"/>
</dbReference>
<dbReference type="SMR" id="C4K1A1"/>
<dbReference type="KEGG" id="rpk:RPR_02670"/>
<dbReference type="HOGENOM" id="CLU_047155_2_0_5"/>
<dbReference type="Proteomes" id="UP000005015">
    <property type="component" value="Chromosome"/>
</dbReference>
<dbReference type="GO" id="GO:0005737">
    <property type="term" value="C:cytoplasm"/>
    <property type="evidence" value="ECO:0007669"/>
    <property type="project" value="UniProtKB-SubCell"/>
</dbReference>
<dbReference type="GO" id="GO:0003746">
    <property type="term" value="F:translation elongation factor activity"/>
    <property type="evidence" value="ECO:0007669"/>
    <property type="project" value="UniProtKB-UniRule"/>
</dbReference>
<dbReference type="CDD" id="cd14275">
    <property type="entry name" value="UBA_EF-Ts"/>
    <property type="match status" value="1"/>
</dbReference>
<dbReference type="FunFam" id="1.10.286.20:FF:000001">
    <property type="entry name" value="Elongation factor Ts"/>
    <property type="match status" value="1"/>
</dbReference>
<dbReference type="FunFam" id="1.10.8.10:FF:000001">
    <property type="entry name" value="Elongation factor Ts"/>
    <property type="match status" value="1"/>
</dbReference>
<dbReference type="Gene3D" id="1.10.286.20">
    <property type="match status" value="1"/>
</dbReference>
<dbReference type="Gene3D" id="1.10.8.10">
    <property type="entry name" value="DNA helicase RuvA subunit, C-terminal domain"/>
    <property type="match status" value="1"/>
</dbReference>
<dbReference type="Gene3D" id="3.30.479.20">
    <property type="entry name" value="Elongation factor Ts, dimerisation domain"/>
    <property type="match status" value="2"/>
</dbReference>
<dbReference type="HAMAP" id="MF_00050">
    <property type="entry name" value="EF_Ts"/>
    <property type="match status" value="1"/>
</dbReference>
<dbReference type="InterPro" id="IPR036402">
    <property type="entry name" value="EF-Ts_dimer_sf"/>
</dbReference>
<dbReference type="InterPro" id="IPR001816">
    <property type="entry name" value="Transl_elong_EFTs/EF1B"/>
</dbReference>
<dbReference type="InterPro" id="IPR014039">
    <property type="entry name" value="Transl_elong_EFTs/EF1B_dimer"/>
</dbReference>
<dbReference type="InterPro" id="IPR018101">
    <property type="entry name" value="Transl_elong_Ts_CS"/>
</dbReference>
<dbReference type="InterPro" id="IPR009060">
    <property type="entry name" value="UBA-like_sf"/>
</dbReference>
<dbReference type="NCBIfam" id="TIGR00116">
    <property type="entry name" value="tsf"/>
    <property type="match status" value="1"/>
</dbReference>
<dbReference type="PANTHER" id="PTHR11741">
    <property type="entry name" value="ELONGATION FACTOR TS"/>
    <property type="match status" value="1"/>
</dbReference>
<dbReference type="PANTHER" id="PTHR11741:SF0">
    <property type="entry name" value="ELONGATION FACTOR TS, MITOCHONDRIAL"/>
    <property type="match status" value="1"/>
</dbReference>
<dbReference type="Pfam" id="PF00889">
    <property type="entry name" value="EF_TS"/>
    <property type="match status" value="1"/>
</dbReference>
<dbReference type="SUPFAM" id="SSF54713">
    <property type="entry name" value="Elongation factor Ts (EF-Ts), dimerisation domain"/>
    <property type="match status" value="1"/>
</dbReference>
<dbReference type="SUPFAM" id="SSF46934">
    <property type="entry name" value="UBA-like"/>
    <property type="match status" value="1"/>
</dbReference>
<dbReference type="PROSITE" id="PS01126">
    <property type="entry name" value="EF_TS_1"/>
    <property type="match status" value="1"/>
</dbReference>
<dbReference type="PROSITE" id="PS01127">
    <property type="entry name" value="EF_TS_2"/>
    <property type="match status" value="1"/>
</dbReference>
<feature type="chain" id="PRO_1000202252" description="Elongation factor Ts">
    <location>
        <begin position="1"/>
        <end position="309"/>
    </location>
</feature>
<feature type="region of interest" description="Involved in Mg(2+) ion dislocation from EF-Tu" evidence="1">
    <location>
        <begin position="82"/>
        <end position="85"/>
    </location>
</feature>
<comment type="function">
    <text evidence="1">Associates with the EF-Tu.GDP complex and induces the exchange of GDP to GTP. It remains bound to the aminoacyl-tRNA.EF-Tu.GTP complex up to the GTP hydrolysis stage on the ribosome.</text>
</comment>
<comment type="subcellular location">
    <subcellularLocation>
        <location evidence="1">Cytoplasm</location>
    </subcellularLocation>
</comment>
<comment type="similarity">
    <text evidence="1">Belongs to the EF-Ts family.</text>
</comment>
<accession>C4K1A1</accession>
<protein>
    <recommendedName>
        <fullName evidence="1">Elongation factor Ts</fullName>
        <shortName evidence="1">EF-Ts</shortName>
    </recommendedName>
</protein>
<keyword id="KW-0963">Cytoplasm</keyword>
<keyword id="KW-0251">Elongation factor</keyword>
<keyword id="KW-0648">Protein biosynthesis</keyword>
<gene>
    <name evidence="1" type="primary">tsf</name>
    <name type="ordered locus">RPR_02670</name>
</gene>
<organism>
    <name type="scientific">Rickettsia peacockii (strain Rustic)</name>
    <dbReference type="NCBI Taxonomy" id="562019"/>
    <lineage>
        <taxon>Bacteria</taxon>
        <taxon>Pseudomonadati</taxon>
        <taxon>Pseudomonadota</taxon>
        <taxon>Alphaproteobacteria</taxon>
        <taxon>Rickettsiales</taxon>
        <taxon>Rickettsiaceae</taxon>
        <taxon>Rickettsieae</taxon>
        <taxon>Rickettsia</taxon>
        <taxon>spotted fever group</taxon>
    </lineage>
</organism>